<sequence>MAAYLLAVAILFCIQGWPSATVQGQVMPFMEVYERSACQTRETLVSILKEYPDEVAHLFKPSCVPVLRCSGCCSDESLKCTATGKHSVGREVMRVDPHKGTSKIEVMQFKEHTDCECRPRSPGDVNNGRNPEEGEPRARFPFV</sequence>
<reference key="1">
    <citation type="journal article" date="2015" name="Biochimie">
        <title>Vascular endothelial growth factor from Trimeresurus jerdonii venom specifically binds to VEGFR-2.</title>
        <authorList>
            <person name="Zhong S."/>
            <person name="Wu J."/>
            <person name="Cui Y."/>
            <person name="Li R."/>
            <person name="Zhu S."/>
            <person name="Rong M."/>
            <person name="Lu Q."/>
            <person name="Lai R."/>
        </authorList>
    </citation>
    <scope>NUCLEOTIDE SEQUENCE [MRNA]</scope>
    <scope>PROTEIN SEQUENCE OF 51-61; 70-95 AND 105-111</scope>
    <scope>FUNCTION</scope>
    <scope>SUBCELLULAR LOCATION</scope>
    <scope>SUBUNIT</scope>
    <scope>PROBABLE PYROGLUTAMATE FORMATION AT GLN-25</scope>
    <source>
        <tissue>Venom</tissue>
        <tissue>Venom gland</tissue>
    </source>
</reference>
<accession>P0DW98</accession>
<protein>
    <recommendedName>
        <fullName>Snake venom vascular endothelial growth factor toxin</fullName>
        <shortName evidence="7">TjsvVEGF</shortName>
        <shortName>svVEGF</shortName>
    </recommendedName>
    <alternativeName>
        <fullName evidence="1">VEGF-F</fullName>
    </alternativeName>
    <alternativeName>
        <fullName evidence="7">Vascular permeability factor</fullName>
        <shortName evidence="7">VPF</shortName>
    </alternativeName>
</protein>
<dbReference type="SMR" id="P0DW98"/>
<dbReference type="GO" id="GO:0005615">
    <property type="term" value="C:extracellular space"/>
    <property type="evidence" value="ECO:0007669"/>
    <property type="project" value="TreeGrafter"/>
</dbReference>
<dbReference type="GO" id="GO:0016020">
    <property type="term" value="C:membrane"/>
    <property type="evidence" value="ECO:0007669"/>
    <property type="project" value="InterPro"/>
</dbReference>
<dbReference type="GO" id="GO:0042056">
    <property type="term" value="F:chemoattractant activity"/>
    <property type="evidence" value="ECO:0007669"/>
    <property type="project" value="TreeGrafter"/>
</dbReference>
<dbReference type="GO" id="GO:0008083">
    <property type="term" value="F:growth factor activity"/>
    <property type="evidence" value="ECO:0007669"/>
    <property type="project" value="UniProtKB-KW"/>
</dbReference>
<dbReference type="GO" id="GO:0090729">
    <property type="term" value="F:toxin activity"/>
    <property type="evidence" value="ECO:0007669"/>
    <property type="project" value="UniProtKB-KW"/>
</dbReference>
<dbReference type="GO" id="GO:0005172">
    <property type="term" value="F:vascular endothelial growth factor receptor binding"/>
    <property type="evidence" value="ECO:0007669"/>
    <property type="project" value="TreeGrafter"/>
</dbReference>
<dbReference type="GO" id="GO:0050930">
    <property type="term" value="P:induction of positive chemotaxis"/>
    <property type="evidence" value="ECO:0007669"/>
    <property type="project" value="TreeGrafter"/>
</dbReference>
<dbReference type="GO" id="GO:0045766">
    <property type="term" value="P:positive regulation of angiogenesis"/>
    <property type="evidence" value="ECO:0007669"/>
    <property type="project" value="TreeGrafter"/>
</dbReference>
<dbReference type="GO" id="GO:0001938">
    <property type="term" value="P:positive regulation of endothelial cell proliferation"/>
    <property type="evidence" value="ECO:0007669"/>
    <property type="project" value="TreeGrafter"/>
</dbReference>
<dbReference type="GO" id="GO:0060754">
    <property type="term" value="P:positive regulation of mast cell chemotaxis"/>
    <property type="evidence" value="ECO:0007669"/>
    <property type="project" value="TreeGrafter"/>
</dbReference>
<dbReference type="GO" id="GO:0001666">
    <property type="term" value="P:response to hypoxia"/>
    <property type="evidence" value="ECO:0007669"/>
    <property type="project" value="TreeGrafter"/>
</dbReference>
<dbReference type="GO" id="GO:0002040">
    <property type="term" value="P:sprouting angiogenesis"/>
    <property type="evidence" value="ECO:0007669"/>
    <property type="project" value="TreeGrafter"/>
</dbReference>
<dbReference type="GO" id="GO:0048010">
    <property type="term" value="P:vascular endothelial growth factor receptor signaling pathway"/>
    <property type="evidence" value="ECO:0007669"/>
    <property type="project" value="TreeGrafter"/>
</dbReference>
<dbReference type="GO" id="GO:0038084">
    <property type="term" value="P:vascular endothelial growth factor signaling pathway"/>
    <property type="evidence" value="ECO:0007669"/>
    <property type="project" value="TreeGrafter"/>
</dbReference>
<dbReference type="CDD" id="cd00135">
    <property type="entry name" value="PDGF"/>
    <property type="match status" value="1"/>
</dbReference>
<dbReference type="FunFam" id="2.10.90.10:FF:000030">
    <property type="entry name" value="Vascular endothelial growth factor B"/>
    <property type="match status" value="1"/>
</dbReference>
<dbReference type="Gene3D" id="2.10.90.10">
    <property type="entry name" value="Cystine-knot cytokines"/>
    <property type="match status" value="1"/>
</dbReference>
<dbReference type="InterPro" id="IPR029034">
    <property type="entry name" value="Cystine-knot_cytokine"/>
</dbReference>
<dbReference type="InterPro" id="IPR023581">
    <property type="entry name" value="PD_growth_factor_CS"/>
</dbReference>
<dbReference type="InterPro" id="IPR000072">
    <property type="entry name" value="PDGF/VEGF_dom"/>
</dbReference>
<dbReference type="InterPro" id="IPR050507">
    <property type="entry name" value="PDGF/VEGF_growth_factor"/>
</dbReference>
<dbReference type="PANTHER" id="PTHR12025">
    <property type="entry name" value="VASCULAR ENDOTHELIAL GROWTH FACTOR"/>
    <property type="match status" value="1"/>
</dbReference>
<dbReference type="PANTHER" id="PTHR12025:SF5">
    <property type="entry name" value="VASCULAR ENDOTHELIAL GROWTH FACTOR A, LONG FORM"/>
    <property type="match status" value="1"/>
</dbReference>
<dbReference type="Pfam" id="PF00341">
    <property type="entry name" value="PDGF"/>
    <property type="match status" value="1"/>
</dbReference>
<dbReference type="SMART" id="SM00141">
    <property type="entry name" value="PDGF"/>
    <property type="match status" value="1"/>
</dbReference>
<dbReference type="SUPFAM" id="SSF57501">
    <property type="entry name" value="Cystine-knot cytokines"/>
    <property type="match status" value="1"/>
</dbReference>
<dbReference type="PROSITE" id="PS00249">
    <property type="entry name" value="PDGF_1"/>
    <property type="match status" value="1"/>
</dbReference>
<dbReference type="PROSITE" id="PS50278">
    <property type="entry name" value="PDGF_2"/>
    <property type="match status" value="1"/>
</dbReference>
<proteinExistence type="evidence at protein level"/>
<name>TXVE_PROJR</name>
<evidence type="ECO:0000250" key="1">
    <source>
        <dbReference type="UniProtKB" id="P0DL42"/>
    </source>
</evidence>
<evidence type="ECO:0000250" key="2">
    <source>
        <dbReference type="UniProtKB" id="P67863"/>
    </source>
</evidence>
<evidence type="ECO:0000250" key="3">
    <source>
        <dbReference type="UniProtKB" id="P83942"/>
    </source>
</evidence>
<evidence type="ECO:0000255" key="4"/>
<evidence type="ECO:0000256" key="5">
    <source>
        <dbReference type="SAM" id="MobiDB-lite"/>
    </source>
</evidence>
<evidence type="ECO:0000269" key="6">
    <source>
    </source>
</evidence>
<evidence type="ECO:0000303" key="7">
    <source>
    </source>
</evidence>
<evidence type="ECO:0000305" key="8"/>
<evidence type="ECO:0000305" key="9">
    <source>
    </source>
</evidence>
<feature type="signal peptide" evidence="4">
    <location>
        <begin position="1"/>
        <end position="24"/>
    </location>
</feature>
<feature type="chain" id="PRO_0000456730" description="Snake venom vascular endothelial growth factor toxin">
    <location>
        <begin position="25"/>
        <end position="143"/>
    </location>
</feature>
<feature type="region of interest" description="Disordered" evidence="5">
    <location>
        <begin position="115"/>
        <end position="143"/>
    </location>
</feature>
<feature type="compositionally biased region" description="Basic and acidic residues" evidence="5">
    <location>
        <begin position="130"/>
        <end position="143"/>
    </location>
</feature>
<feature type="modified residue" description="Pyrrolidone carboxylic acid" evidence="9">
    <location>
        <position position="25"/>
    </location>
</feature>
<feature type="disulfide bond" evidence="2">
    <location>
        <begin position="38"/>
        <end position="80"/>
    </location>
</feature>
<feature type="disulfide bond" description="Interchain (with C-72)" evidence="2">
    <location>
        <position position="63"/>
    </location>
</feature>
<feature type="disulfide bond" evidence="2">
    <location>
        <begin position="69"/>
        <end position="115"/>
    </location>
</feature>
<feature type="disulfide bond" description="Interchain (with C-63)" evidence="2">
    <location>
        <position position="72"/>
    </location>
</feature>
<feature type="disulfide bond" evidence="2">
    <location>
        <begin position="73"/>
        <end position="117"/>
    </location>
</feature>
<comment type="function">
    <text evidence="3 6">Snake venom VEGFs that may contribute to venom dispersion and prey subjugation by inducing vascular permeability and hypotension. This protein induces an increase in capillary permeability when intradermally injected into mice (PubMed:26107411). Also provokes a drastic hypotensive effect after intravenous injection (By similarity). The hypotension is mediated by nitric oxide (NO), which is produced by VEGF-activated endothelium NO synthase. Also induces angiogenesis in vitro (By similarity). Unlike other crotalid VEGFs, this protein interacts with VEGF receptor-2 (KDR) with a high affinity (Kd=413 pM), whereas no interaction is detected with VEGF receptor-1 (FLT1) (PubMed:26107411).</text>
</comment>
<comment type="subunit">
    <text evidence="6">Homodimer; disulfide-linked (PubMed:26107411). Interacts with VEGF receptor-2 (KDR) (PubMed:26107411).</text>
</comment>
<comment type="subcellular location">
    <subcellularLocation>
        <location evidence="6">Secreted</location>
    </subcellularLocation>
</comment>
<comment type="tissue specificity">
    <text evidence="9">Expressed by the venom gland.</text>
</comment>
<comment type="PTM">
    <text evidence="6">The N-terminus is blocked for N-terminal sequencing, suggesting a Pyrrolidone carboxylic acid at Gln-25.</text>
</comment>
<comment type="similarity">
    <text evidence="8">Belongs to the PDGF/VEGF growth factor family. Snake venom VEGF subfamily.</text>
</comment>
<organism>
    <name type="scientific">Protobothrops jerdonii</name>
    <name type="common">Jerdon's pitviper</name>
    <name type="synonym">Trimeresurus jerdonii</name>
    <dbReference type="NCBI Taxonomy" id="242841"/>
    <lineage>
        <taxon>Eukaryota</taxon>
        <taxon>Metazoa</taxon>
        <taxon>Chordata</taxon>
        <taxon>Craniata</taxon>
        <taxon>Vertebrata</taxon>
        <taxon>Euteleostomi</taxon>
        <taxon>Lepidosauria</taxon>
        <taxon>Squamata</taxon>
        <taxon>Bifurcata</taxon>
        <taxon>Unidentata</taxon>
        <taxon>Episquamata</taxon>
        <taxon>Toxicofera</taxon>
        <taxon>Serpentes</taxon>
        <taxon>Colubroidea</taxon>
        <taxon>Viperidae</taxon>
        <taxon>Crotalinae</taxon>
        <taxon>Protobothrops</taxon>
    </lineage>
</organism>
<keyword id="KW-0903">Direct protein sequencing</keyword>
<keyword id="KW-1015">Disulfide bond</keyword>
<keyword id="KW-0339">Growth factor</keyword>
<keyword id="KW-0873">Pyrrolidone carboxylic acid</keyword>
<keyword id="KW-0964">Secreted</keyword>
<keyword id="KW-0732">Signal</keyword>
<keyword id="KW-0800">Toxin</keyword>